<gene>
    <name type="primary">sec23</name>
    <name type="ORF">DDB_G0281985</name>
</gene>
<comment type="function">
    <text evidence="1">Component of the coat protein complex II (COPII) which promotes the formation of transport vesicles from the endoplasmic reticulum (ER). The coat has two main functions, the physical deformation of the endoplasmic reticulum membrane into vesicles and the selection of cargo molecules (By similarity).</text>
</comment>
<comment type="subunit">
    <text evidence="1">The COPII coat is composed of at least 5 proteins: the sec23/24 complex, the sec13/31 complex, and the protein sar1A or sar1B.</text>
</comment>
<comment type="subcellular location">
    <subcellularLocation>
        <location evidence="1">Cytoplasmic vesicle</location>
        <location evidence="1">COPII-coated vesicle membrane</location>
        <topology evidence="1">Peripheral membrane protein</topology>
        <orientation evidence="1">Cytoplasmic side</orientation>
    </subcellularLocation>
    <subcellularLocation>
        <location evidence="1">Endoplasmic reticulum membrane</location>
        <topology evidence="1">Peripheral membrane protein</topology>
        <orientation evidence="1">Cytoplasmic side</orientation>
    </subcellularLocation>
    <subcellularLocation>
        <location evidence="1">Golgi apparatus membrane</location>
        <topology evidence="1">Peripheral membrane protein</topology>
        <orientation evidence="1">Cytoplasmic side</orientation>
    </subcellularLocation>
</comment>
<comment type="similarity">
    <text evidence="2">Belongs to the SEC23/SEC24 family. SEC23 subfamily.</text>
</comment>
<protein>
    <recommendedName>
        <fullName>Protein transport protein SEC23</fullName>
    </recommendedName>
</protein>
<organism>
    <name type="scientific">Dictyostelium discoideum</name>
    <name type="common">Social amoeba</name>
    <dbReference type="NCBI Taxonomy" id="44689"/>
    <lineage>
        <taxon>Eukaryota</taxon>
        <taxon>Amoebozoa</taxon>
        <taxon>Evosea</taxon>
        <taxon>Eumycetozoa</taxon>
        <taxon>Dictyostelia</taxon>
        <taxon>Dictyosteliales</taxon>
        <taxon>Dictyosteliaceae</taxon>
        <taxon>Dictyostelium</taxon>
    </lineage>
</organism>
<feature type="chain" id="PRO_0000328077" description="Protein transport protein SEC23">
    <location>
        <begin position="1"/>
        <end position="750"/>
    </location>
</feature>
<name>SEC23_DICDI</name>
<accession>Q54T59</accession>
<reference key="1">
    <citation type="journal article" date="2005" name="Nature">
        <title>The genome of the social amoeba Dictyostelium discoideum.</title>
        <authorList>
            <person name="Eichinger L."/>
            <person name="Pachebat J.A."/>
            <person name="Gloeckner G."/>
            <person name="Rajandream M.A."/>
            <person name="Sucgang R."/>
            <person name="Berriman M."/>
            <person name="Song J."/>
            <person name="Olsen R."/>
            <person name="Szafranski K."/>
            <person name="Xu Q."/>
            <person name="Tunggal B."/>
            <person name="Kummerfeld S."/>
            <person name="Madera M."/>
            <person name="Konfortov B.A."/>
            <person name="Rivero F."/>
            <person name="Bankier A.T."/>
            <person name="Lehmann R."/>
            <person name="Hamlin N."/>
            <person name="Davies R."/>
            <person name="Gaudet P."/>
            <person name="Fey P."/>
            <person name="Pilcher K."/>
            <person name="Chen G."/>
            <person name="Saunders D."/>
            <person name="Sodergren E.J."/>
            <person name="Davis P."/>
            <person name="Kerhornou A."/>
            <person name="Nie X."/>
            <person name="Hall N."/>
            <person name="Anjard C."/>
            <person name="Hemphill L."/>
            <person name="Bason N."/>
            <person name="Farbrother P."/>
            <person name="Desany B."/>
            <person name="Just E."/>
            <person name="Morio T."/>
            <person name="Rost R."/>
            <person name="Churcher C.M."/>
            <person name="Cooper J."/>
            <person name="Haydock S."/>
            <person name="van Driessche N."/>
            <person name="Cronin A."/>
            <person name="Goodhead I."/>
            <person name="Muzny D.M."/>
            <person name="Mourier T."/>
            <person name="Pain A."/>
            <person name="Lu M."/>
            <person name="Harper D."/>
            <person name="Lindsay R."/>
            <person name="Hauser H."/>
            <person name="James K.D."/>
            <person name="Quiles M."/>
            <person name="Madan Babu M."/>
            <person name="Saito T."/>
            <person name="Buchrieser C."/>
            <person name="Wardroper A."/>
            <person name="Felder M."/>
            <person name="Thangavelu M."/>
            <person name="Johnson D."/>
            <person name="Knights A."/>
            <person name="Loulseged H."/>
            <person name="Mungall K.L."/>
            <person name="Oliver K."/>
            <person name="Price C."/>
            <person name="Quail M.A."/>
            <person name="Urushihara H."/>
            <person name="Hernandez J."/>
            <person name="Rabbinowitsch E."/>
            <person name="Steffen D."/>
            <person name="Sanders M."/>
            <person name="Ma J."/>
            <person name="Kohara Y."/>
            <person name="Sharp S."/>
            <person name="Simmonds M.N."/>
            <person name="Spiegler S."/>
            <person name="Tivey A."/>
            <person name="Sugano S."/>
            <person name="White B."/>
            <person name="Walker D."/>
            <person name="Woodward J.R."/>
            <person name="Winckler T."/>
            <person name="Tanaka Y."/>
            <person name="Shaulsky G."/>
            <person name="Schleicher M."/>
            <person name="Weinstock G.M."/>
            <person name="Rosenthal A."/>
            <person name="Cox E.C."/>
            <person name="Chisholm R.L."/>
            <person name="Gibbs R.A."/>
            <person name="Loomis W.F."/>
            <person name="Platzer M."/>
            <person name="Kay R.R."/>
            <person name="Williams J.G."/>
            <person name="Dear P.H."/>
            <person name="Noegel A.A."/>
            <person name="Barrell B.G."/>
            <person name="Kuspa A."/>
        </authorList>
    </citation>
    <scope>NUCLEOTIDE SEQUENCE [LARGE SCALE GENOMIC DNA]</scope>
    <source>
        <strain>AX4</strain>
    </source>
</reference>
<proteinExistence type="inferred from homology"/>
<keyword id="KW-0968">Cytoplasmic vesicle</keyword>
<keyword id="KW-0256">Endoplasmic reticulum</keyword>
<keyword id="KW-0931">ER-Golgi transport</keyword>
<keyword id="KW-0333">Golgi apparatus</keyword>
<keyword id="KW-0472">Membrane</keyword>
<keyword id="KW-0479">Metal-binding</keyword>
<keyword id="KW-0653">Protein transport</keyword>
<keyword id="KW-1185">Reference proteome</keyword>
<keyword id="KW-0813">Transport</keyword>
<keyword id="KW-0862">Zinc</keyword>
<dbReference type="EMBL" id="AAFI02000044">
    <property type="protein sequence ID" value="EAL66414.2"/>
    <property type="molecule type" value="Genomic_DNA"/>
</dbReference>
<dbReference type="RefSeq" id="XP_640392.2">
    <property type="nucleotide sequence ID" value="XM_635300.2"/>
</dbReference>
<dbReference type="SMR" id="Q54T59"/>
<dbReference type="FunCoup" id="Q54T59">
    <property type="interactions" value="912"/>
</dbReference>
<dbReference type="STRING" id="44689.Q54T59"/>
<dbReference type="GlyGen" id="Q54T59">
    <property type="glycosylation" value="1 site"/>
</dbReference>
<dbReference type="PaxDb" id="44689-DDB0235163"/>
<dbReference type="EnsemblProtists" id="EAL66414">
    <property type="protein sequence ID" value="EAL66414"/>
    <property type="gene ID" value="DDB_G0281985"/>
</dbReference>
<dbReference type="GeneID" id="8623347"/>
<dbReference type="KEGG" id="ddi:DDB_G0281985"/>
<dbReference type="dictyBase" id="DDB_G0281985">
    <property type="gene designation" value="sec23"/>
</dbReference>
<dbReference type="VEuPathDB" id="AmoebaDB:DDB_G0281985"/>
<dbReference type="eggNOG" id="KOG1986">
    <property type="taxonomic scope" value="Eukaryota"/>
</dbReference>
<dbReference type="HOGENOM" id="CLU_008658_3_0_1"/>
<dbReference type="InParanoid" id="Q54T59"/>
<dbReference type="OMA" id="FPPHYAE"/>
<dbReference type="PhylomeDB" id="Q54T59"/>
<dbReference type="Reactome" id="R-DDI-204005">
    <property type="pathway name" value="COPII-mediated vesicle transport"/>
</dbReference>
<dbReference type="Reactome" id="R-DDI-5694530">
    <property type="pathway name" value="Cargo concentration in the ER"/>
</dbReference>
<dbReference type="Reactome" id="R-DDI-983170">
    <property type="pathway name" value="Antigen Presentation: Folding, assembly and peptide loading of class I MHC"/>
</dbReference>
<dbReference type="PRO" id="PR:Q54T59"/>
<dbReference type="Proteomes" id="UP000002195">
    <property type="component" value="Chromosome 3"/>
</dbReference>
<dbReference type="GO" id="GO:0030127">
    <property type="term" value="C:COPII vesicle coat"/>
    <property type="evidence" value="ECO:0000318"/>
    <property type="project" value="GO_Central"/>
</dbReference>
<dbReference type="GO" id="GO:0070971">
    <property type="term" value="C:endoplasmic reticulum exit site"/>
    <property type="evidence" value="ECO:0000318"/>
    <property type="project" value="GO_Central"/>
</dbReference>
<dbReference type="GO" id="GO:0005789">
    <property type="term" value="C:endoplasmic reticulum membrane"/>
    <property type="evidence" value="ECO:0007669"/>
    <property type="project" value="UniProtKB-SubCell"/>
</dbReference>
<dbReference type="GO" id="GO:0000139">
    <property type="term" value="C:Golgi membrane"/>
    <property type="evidence" value="ECO:0007669"/>
    <property type="project" value="UniProtKB-SubCell"/>
</dbReference>
<dbReference type="GO" id="GO:0005096">
    <property type="term" value="F:GTPase activator activity"/>
    <property type="evidence" value="ECO:0000318"/>
    <property type="project" value="GO_Central"/>
</dbReference>
<dbReference type="GO" id="GO:0008270">
    <property type="term" value="F:zinc ion binding"/>
    <property type="evidence" value="ECO:0007669"/>
    <property type="project" value="InterPro"/>
</dbReference>
<dbReference type="GO" id="GO:0090110">
    <property type="term" value="P:COPII-coated vesicle cargo loading"/>
    <property type="evidence" value="ECO:0000318"/>
    <property type="project" value="GO_Central"/>
</dbReference>
<dbReference type="GO" id="GO:0006886">
    <property type="term" value="P:intracellular protein transport"/>
    <property type="evidence" value="ECO:0007669"/>
    <property type="project" value="InterPro"/>
</dbReference>
<dbReference type="CDD" id="cd11287">
    <property type="entry name" value="Sec23_C"/>
    <property type="match status" value="1"/>
</dbReference>
<dbReference type="FunFam" id="1.20.120.730:FF:000005">
    <property type="entry name" value="Protein transport protein SEC23"/>
    <property type="match status" value="1"/>
</dbReference>
<dbReference type="FunFam" id="2.30.30.380:FF:000001">
    <property type="entry name" value="Protein transport protein SEC23"/>
    <property type="match status" value="1"/>
</dbReference>
<dbReference type="FunFam" id="3.40.20.10:FF:000041">
    <property type="entry name" value="Protein transport protein SEC23"/>
    <property type="match status" value="1"/>
</dbReference>
<dbReference type="FunFam" id="3.40.50.410:FF:000008">
    <property type="entry name" value="Protein transport protein SEC23"/>
    <property type="match status" value="1"/>
</dbReference>
<dbReference type="Gene3D" id="2.60.40.1670">
    <property type="entry name" value="beta-sandwich domain of Sec23/24"/>
    <property type="match status" value="1"/>
</dbReference>
<dbReference type="Gene3D" id="1.20.120.730">
    <property type="entry name" value="Sec23/Sec24 helical domain"/>
    <property type="match status" value="1"/>
</dbReference>
<dbReference type="Gene3D" id="3.40.20.10">
    <property type="entry name" value="Severin"/>
    <property type="match status" value="1"/>
</dbReference>
<dbReference type="Gene3D" id="3.40.50.410">
    <property type="entry name" value="von Willebrand factor, type A domain"/>
    <property type="match status" value="1"/>
</dbReference>
<dbReference type="Gene3D" id="2.30.30.380">
    <property type="entry name" value="Zn-finger domain of Sec23/24"/>
    <property type="match status" value="1"/>
</dbReference>
<dbReference type="InterPro" id="IPR029006">
    <property type="entry name" value="ADF-H/Gelsolin-like_dom_sf"/>
</dbReference>
<dbReference type="InterPro" id="IPR007123">
    <property type="entry name" value="Gelsolin-like_dom"/>
</dbReference>
<dbReference type="InterPro" id="IPR036180">
    <property type="entry name" value="Gelsolin-like_dom_sf"/>
</dbReference>
<dbReference type="InterPro" id="IPR037364">
    <property type="entry name" value="Sec23"/>
</dbReference>
<dbReference type="InterPro" id="IPR006900">
    <property type="entry name" value="Sec23/24_helical_dom"/>
</dbReference>
<dbReference type="InterPro" id="IPR036175">
    <property type="entry name" value="Sec23/24_helical_dom_sf"/>
</dbReference>
<dbReference type="InterPro" id="IPR006896">
    <property type="entry name" value="Sec23/24_trunk_dom"/>
</dbReference>
<dbReference type="InterPro" id="IPR012990">
    <property type="entry name" value="Sec23_24_beta_S"/>
</dbReference>
<dbReference type="InterPro" id="IPR037550">
    <property type="entry name" value="Sec23_C"/>
</dbReference>
<dbReference type="InterPro" id="IPR036465">
    <property type="entry name" value="vWFA_dom_sf"/>
</dbReference>
<dbReference type="InterPro" id="IPR006895">
    <property type="entry name" value="Znf_Sec23_Sec24"/>
</dbReference>
<dbReference type="InterPro" id="IPR036174">
    <property type="entry name" value="Znf_Sec23_Sec24_sf"/>
</dbReference>
<dbReference type="PANTHER" id="PTHR11141">
    <property type="entry name" value="PROTEIN TRANSPORT PROTEIN SEC23"/>
    <property type="match status" value="1"/>
</dbReference>
<dbReference type="PANTHER" id="PTHR11141:SF0">
    <property type="entry name" value="PROTEIN TRANSPORT PROTEIN SEC23"/>
    <property type="match status" value="1"/>
</dbReference>
<dbReference type="Pfam" id="PF00626">
    <property type="entry name" value="Gelsolin"/>
    <property type="match status" value="1"/>
</dbReference>
<dbReference type="Pfam" id="PF08033">
    <property type="entry name" value="Sec23_BS"/>
    <property type="match status" value="1"/>
</dbReference>
<dbReference type="Pfam" id="PF04815">
    <property type="entry name" value="Sec23_helical"/>
    <property type="match status" value="1"/>
</dbReference>
<dbReference type="Pfam" id="PF04811">
    <property type="entry name" value="Sec23_trunk"/>
    <property type="match status" value="1"/>
</dbReference>
<dbReference type="Pfam" id="PF04810">
    <property type="entry name" value="zf-Sec23_Sec24"/>
    <property type="match status" value="1"/>
</dbReference>
<dbReference type="SUPFAM" id="SSF81995">
    <property type="entry name" value="beta-sandwich domain of Sec23/24"/>
    <property type="match status" value="1"/>
</dbReference>
<dbReference type="SUPFAM" id="SSF82754">
    <property type="entry name" value="C-terminal, gelsolin-like domain of Sec23/24"/>
    <property type="match status" value="1"/>
</dbReference>
<dbReference type="SUPFAM" id="SSF81811">
    <property type="entry name" value="Helical domain of Sec23/24"/>
    <property type="match status" value="1"/>
</dbReference>
<dbReference type="SUPFAM" id="SSF53300">
    <property type="entry name" value="vWA-like"/>
    <property type="match status" value="1"/>
</dbReference>
<dbReference type="SUPFAM" id="SSF82919">
    <property type="entry name" value="Zn-finger domain of Sec23/24"/>
    <property type="match status" value="1"/>
</dbReference>
<evidence type="ECO:0000250" key="1"/>
<evidence type="ECO:0000305" key="2"/>
<sequence length="750" mass="84701">MNFDQSEDRDGVRFSWNVWPTSRVEATKNLLVPLGCLYTPLHQSPEITQVPYPPLRCKGICNAILNPYCTIAPPYKTWVCPFCLQHNQFPPHYAGISDLNRPAELLPHVTTIEYQLPTAETPLPIYLFVVDVCVPDDELQSLTDSLTMSLSLIPENSYVGLITFGSMVQLYELGFTSCPKSYVFRGDPPTNTFKIANLMQKVGSPETMNLQSKRFLVPVSECEFHLTSILEEIQKDPCRVASDKRPLRATGMAFSVANALLSTVASNMGGRIMAFIGGPATTGPGLVVSEDLREPIRSHHEVIKGKTKYTSKAYQFYKSIGERSVASGHAIDIFSCSLDQVGLYEMREMVKLTGGYMVLADSFDHPMFTQSFQKIFTREDNAFKMGYNAEVQVCTSMSLKVCGAIGHMSSRNNKTSCVGENEIGIGGTSSWKVCALDQNSTFAFYFEIANTQQNAPEQLGLVQFITSYQNSLGKQILRVSTIRREWVQHTMEQQQNITMLANGFDQETSAVLMARLAVFKAETEELPDITRWLDKMLIKLVSKYADYRRDDPTSFKLVSNFSIYPHFMFHLRRSSFLQVFNSSPDESSFYRFMLNRENVSNSLIMIQPTLEKYSFSGPPHPEVLSASSISIDSILLLDTFFHVLIFHGETIAQWRKAGYDKDPQHQNFRDLLQAPRDDAAHILKERFPYPRYIVCDQHSGEARFLLATIDPNITHTSNTPQDPSKGEIVFTDDVNLHVFLEHLKKFAVQS</sequence>